<keyword id="KW-0067">ATP-binding</keyword>
<keyword id="KW-0408">Iron</keyword>
<keyword id="KW-0411">Iron-sulfur</keyword>
<keyword id="KW-0479">Metal-binding</keyword>
<keyword id="KW-0535">Nitrogen fixation</keyword>
<keyword id="KW-0547">Nucleotide-binding</keyword>
<keyword id="KW-0560">Oxidoreductase</keyword>
<feature type="chain" id="PRO_0000153087" description="Nitrogenase molybdenum-iron protein beta chain">
    <location>
        <begin position="1"/>
        <end position="521"/>
    </location>
</feature>
<feature type="binding site" evidence="1">
    <location>
        <position position="77"/>
    </location>
    <ligand>
        <name>[8Fe-7S] cluster</name>
        <dbReference type="ChEBI" id="CHEBI:21143"/>
        <note>ligand shared with alpha chain</note>
    </ligand>
</feature>
<feature type="binding site" evidence="1">
    <location>
        <position position="102"/>
    </location>
    <ligand>
        <name>[8Fe-7S] cluster</name>
        <dbReference type="ChEBI" id="CHEBI:21143"/>
        <note>ligand shared with alpha chain</note>
    </ligand>
</feature>
<feature type="binding site" evidence="1">
    <location>
        <position position="159"/>
    </location>
    <ligand>
        <name>[8Fe-7S] cluster</name>
        <dbReference type="ChEBI" id="CHEBI:21143"/>
        <note>ligand shared with alpha chain</note>
    </ligand>
</feature>
<proteinExistence type="inferred from homology"/>
<protein>
    <recommendedName>
        <fullName>Nitrogenase molybdenum-iron protein beta chain</fullName>
        <ecNumber>1.18.6.1</ecNumber>
    </recommendedName>
    <alternativeName>
        <fullName>Dinitrogenase</fullName>
    </alternativeName>
    <alternativeName>
        <fullName>Nitrogenase component I</fullName>
    </alternativeName>
</protein>
<gene>
    <name type="primary">nifK</name>
</gene>
<evidence type="ECO:0000250" key="1"/>
<evidence type="ECO:0000305" key="2"/>
<dbReference type="EC" id="1.18.6.1"/>
<dbReference type="EMBL" id="M64344">
    <property type="protein sequence ID" value="AAB02344.1"/>
    <property type="molecule type" value="Genomic_DNA"/>
</dbReference>
<dbReference type="PIR" id="S27475">
    <property type="entry name" value="S27475"/>
</dbReference>
<dbReference type="SMR" id="P25314"/>
<dbReference type="GO" id="GO:0016612">
    <property type="term" value="C:molybdenum-iron nitrogenase complex"/>
    <property type="evidence" value="ECO:0007669"/>
    <property type="project" value="InterPro"/>
</dbReference>
<dbReference type="GO" id="GO:0005524">
    <property type="term" value="F:ATP binding"/>
    <property type="evidence" value="ECO:0007669"/>
    <property type="project" value="UniProtKB-KW"/>
</dbReference>
<dbReference type="GO" id="GO:0051536">
    <property type="term" value="F:iron-sulfur cluster binding"/>
    <property type="evidence" value="ECO:0007669"/>
    <property type="project" value="UniProtKB-KW"/>
</dbReference>
<dbReference type="GO" id="GO:0046872">
    <property type="term" value="F:metal ion binding"/>
    <property type="evidence" value="ECO:0007669"/>
    <property type="project" value="UniProtKB-KW"/>
</dbReference>
<dbReference type="GO" id="GO:0016163">
    <property type="term" value="F:nitrogenase activity"/>
    <property type="evidence" value="ECO:0007669"/>
    <property type="project" value="UniProtKB-EC"/>
</dbReference>
<dbReference type="GO" id="GO:0009399">
    <property type="term" value="P:nitrogen fixation"/>
    <property type="evidence" value="ECO:0007669"/>
    <property type="project" value="UniProtKB-KW"/>
</dbReference>
<dbReference type="CDD" id="cd01974">
    <property type="entry name" value="Nitrogenase_MoFe_beta"/>
    <property type="match status" value="1"/>
</dbReference>
<dbReference type="Gene3D" id="3.40.50.1980">
    <property type="entry name" value="Nitrogenase molybdenum iron protein domain"/>
    <property type="match status" value="3"/>
</dbReference>
<dbReference type="Gene3D" id="1.20.89.10">
    <property type="entry name" value="Nitrogenase Molybdenum-iron Protein, subunit B, domain 4"/>
    <property type="match status" value="1"/>
</dbReference>
<dbReference type="InterPro" id="IPR050152">
    <property type="entry name" value="ChlB/BchB/BchZ"/>
</dbReference>
<dbReference type="InterPro" id="IPR000510">
    <property type="entry name" value="Nase/OxRdtase_comp1"/>
</dbReference>
<dbReference type="InterPro" id="IPR000318">
    <property type="entry name" value="Nase_comp1_CS"/>
</dbReference>
<dbReference type="InterPro" id="IPR005976">
    <property type="entry name" value="Nase_Mo-Fe_CF_bsu"/>
</dbReference>
<dbReference type="InterPro" id="IPR024564">
    <property type="entry name" value="Nase_Mo-Fe_CF_bsu_N"/>
</dbReference>
<dbReference type="NCBIfam" id="TIGR01286">
    <property type="entry name" value="nifK"/>
    <property type="match status" value="1"/>
</dbReference>
<dbReference type="PANTHER" id="PTHR33712">
    <property type="entry name" value="LIGHT-INDEPENDENT PROTOCHLOROPHYLLIDE REDUCTASE SUBUNIT B"/>
    <property type="match status" value="1"/>
</dbReference>
<dbReference type="PANTHER" id="PTHR33712:SF7">
    <property type="entry name" value="LIGHT-INDEPENDENT PROTOCHLOROPHYLLIDE REDUCTASE SUBUNIT B"/>
    <property type="match status" value="1"/>
</dbReference>
<dbReference type="Pfam" id="PF11844">
    <property type="entry name" value="DUF3364"/>
    <property type="match status" value="1"/>
</dbReference>
<dbReference type="Pfam" id="PF00148">
    <property type="entry name" value="Oxidored_nitro"/>
    <property type="match status" value="1"/>
</dbReference>
<dbReference type="SUPFAM" id="SSF53807">
    <property type="entry name" value="Helical backbone' metal receptor"/>
    <property type="match status" value="1"/>
</dbReference>
<dbReference type="PROSITE" id="PS00699">
    <property type="entry name" value="NITROGENASE_1_1"/>
    <property type="match status" value="1"/>
</dbReference>
<dbReference type="PROSITE" id="PS00090">
    <property type="entry name" value="NITROGENASE_1_2"/>
    <property type="match status" value="1"/>
</dbReference>
<organism>
    <name type="scientific">Azospirillum brasilense</name>
    <dbReference type="NCBI Taxonomy" id="192"/>
    <lineage>
        <taxon>Bacteria</taxon>
        <taxon>Pseudomonadati</taxon>
        <taxon>Pseudomonadota</taxon>
        <taxon>Alphaproteobacteria</taxon>
        <taxon>Rhodospirillales</taxon>
        <taxon>Azospirillaceae</taxon>
        <taxon>Azospirillum</taxon>
    </lineage>
</organism>
<reference key="1">
    <citation type="journal article" date="1991" name="Braz. J. Med. Biol. Res.">
        <title>The nifHDK operon in the free-living nitrogen-fixing bacteria Azospirillum brasilense sequentially comprises genes H, D, K, an 353 bp orf and gene Y.</title>
        <authorList>
            <person name="Passaglia L.M.P."/>
            <person name="Nunes C.P."/>
            <person name="Zaha A."/>
            <person name="Schrank I.S."/>
        </authorList>
    </citation>
    <scope>NUCLEOTIDE SEQUENCE [GENOMIC DNA]</scope>
</reference>
<comment type="function">
    <text>This molybdenum-iron protein is part of the nitrogenase complex that catalyzes the key enzymatic reactions in nitrogen fixation.</text>
</comment>
<comment type="catalytic activity">
    <reaction>
        <text>N2 + 8 reduced [2Fe-2S]-[ferredoxin] + 16 ATP + 16 H2O = H2 + 8 oxidized [2Fe-2S]-[ferredoxin] + 2 NH4(+) + 16 ADP + 16 phosphate + 6 H(+)</text>
        <dbReference type="Rhea" id="RHEA:21448"/>
        <dbReference type="Rhea" id="RHEA-COMP:10000"/>
        <dbReference type="Rhea" id="RHEA-COMP:10001"/>
        <dbReference type="ChEBI" id="CHEBI:15377"/>
        <dbReference type="ChEBI" id="CHEBI:15378"/>
        <dbReference type="ChEBI" id="CHEBI:17997"/>
        <dbReference type="ChEBI" id="CHEBI:18276"/>
        <dbReference type="ChEBI" id="CHEBI:28938"/>
        <dbReference type="ChEBI" id="CHEBI:30616"/>
        <dbReference type="ChEBI" id="CHEBI:33737"/>
        <dbReference type="ChEBI" id="CHEBI:33738"/>
        <dbReference type="ChEBI" id="CHEBI:43474"/>
        <dbReference type="ChEBI" id="CHEBI:456216"/>
        <dbReference type="EC" id="1.18.6.1"/>
    </reaction>
</comment>
<comment type="cofactor">
    <cofactor evidence="1">
        <name>[8Fe-7S] cluster</name>
        <dbReference type="ChEBI" id="CHEBI:21143"/>
    </cofactor>
    <text evidence="1">Binds 1 [8Fe-7S] cluster per heterodimer.</text>
</comment>
<comment type="subunit">
    <text>Tetramer of two alpha and two beta chains. Forms complex with the iron protein (nitrogenase component 2).</text>
</comment>
<comment type="miscellaneous">
    <text>Ala-194 is present instead of the usual Ser that would serve as a ligand for the 8Fe-7S cluster in the oxidized state.</text>
</comment>
<comment type="similarity">
    <text evidence="2">Belongs to the NifD/NifK/NifE/NifN family.</text>
</comment>
<sequence length="521" mass="58216">MSMSHPVSQSADKVIDHFTLFRQPEYKELFERKKTEFEYGPTPTKEVARVSAWTKTEEYKEKNLPVEAVVINPTKACQPIGAMLAAQGFEGTLPFVHGSQGCVSYYRTHLTRHFKEPNSAVSSSMTEDAAVFGGLNNMIDGLQRYALYKPKMIAVLTTCMAEVIGDDLSGFINNAKNKESVPADFPVPFAHTPAFVGSHIVGYDNMIKGVLTHFWGTSENFDTPKNETINLIPGFDGFAVGNNRELKRIAGLFGIQMTILSDVSDNFDTPADGEYRMYDGGTPLEATKEAVHAKATISMQEYCTPQSLQFIKREGPAGRQAYNYPMGVTGTDELLMKLAELSGKPSRGVKLERGRLVDAIADSHTHLHGKRFAVYGDPDFCLGMSKFLMELGAEPVHILSTSGSKKWEKQVQKVLDACRSASSGKAYGAKDLWHLRSLVFTDKVDYIIGNSYGKYLERDTKIPLIRLTYPIFDRHHHHRYPTWGYQGALNVLVRILDRIFEDMDANTNIVGETDYSFDLVR</sequence>
<name>NIFK_AZOBR</name>
<accession>P25314</accession>